<sequence>MRKSFYTWLMAQRNPKSNEPVAILADLAFEDSTFPKHTDDFEEVSRYLEDHASFSFNLGQFDQIWEDYLAH</sequence>
<comment type="similarity">
    <text evidence="1">Belongs to the UPF0346 family.</text>
</comment>
<accession>Q5M5M7</accession>
<protein>
    <recommendedName>
        <fullName evidence="1">UPF0346 protein stu0441</fullName>
    </recommendedName>
</protein>
<dbReference type="EMBL" id="AY730642">
    <property type="protein sequence ID" value="AAW82372.1"/>
    <property type="molecule type" value="Genomic_DNA"/>
</dbReference>
<dbReference type="EMBL" id="CP000023">
    <property type="protein sequence ID" value="AAV60154.1"/>
    <property type="molecule type" value="Genomic_DNA"/>
</dbReference>
<dbReference type="RefSeq" id="WP_002944188.1">
    <property type="nucleotide sequence ID" value="NC_006448.1"/>
</dbReference>
<dbReference type="SMR" id="Q5M5M7"/>
<dbReference type="STRING" id="264199.stu0441"/>
<dbReference type="KEGG" id="stl:stu0441"/>
<dbReference type="eggNOG" id="COG4479">
    <property type="taxonomic scope" value="Bacteria"/>
</dbReference>
<dbReference type="HOGENOM" id="CLU_177534_1_0_9"/>
<dbReference type="Proteomes" id="UP000001170">
    <property type="component" value="Chromosome"/>
</dbReference>
<dbReference type="Gene3D" id="1.10.150.260">
    <property type="entry name" value="YozE SAM-like"/>
    <property type="match status" value="1"/>
</dbReference>
<dbReference type="HAMAP" id="MF_01538">
    <property type="entry name" value="UPF0346"/>
    <property type="match status" value="1"/>
</dbReference>
<dbReference type="InterPro" id="IPR010673">
    <property type="entry name" value="UPF0346"/>
</dbReference>
<dbReference type="InterPro" id="IPR023089">
    <property type="entry name" value="YozE_SAM-like"/>
</dbReference>
<dbReference type="InterPro" id="IPR036806">
    <property type="entry name" value="YozE_SAM-like_sf"/>
</dbReference>
<dbReference type="NCBIfam" id="NF010193">
    <property type="entry name" value="PRK13672.1"/>
    <property type="match status" value="1"/>
</dbReference>
<dbReference type="Pfam" id="PF06855">
    <property type="entry name" value="YozE_SAM_like"/>
    <property type="match status" value="1"/>
</dbReference>
<dbReference type="PIRSF" id="PIRSF037262">
    <property type="entry name" value="UCP037262"/>
    <property type="match status" value="1"/>
</dbReference>
<dbReference type="SUPFAM" id="SSF140652">
    <property type="entry name" value="YozE-like"/>
    <property type="match status" value="1"/>
</dbReference>
<keyword id="KW-1185">Reference proteome</keyword>
<feature type="chain" id="PRO_0000164301" description="UPF0346 protein stu0441">
    <location>
        <begin position="1"/>
        <end position="71"/>
    </location>
</feature>
<organism>
    <name type="scientific">Streptococcus thermophilus (strain ATCC BAA-250 / LMG 18311)</name>
    <dbReference type="NCBI Taxonomy" id="264199"/>
    <lineage>
        <taxon>Bacteria</taxon>
        <taxon>Bacillati</taxon>
        <taxon>Bacillota</taxon>
        <taxon>Bacilli</taxon>
        <taxon>Lactobacillales</taxon>
        <taxon>Streptococcaceae</taxon>
        <taxon>Streptococcus</taxon>
    </lineage>
</organism>
<proteinExistence type="inferred from homology"/>
<reference key="1">
    <citation type="journal article" date="2005" name="J. Bacteriol.">
        <title>cse, a chimeric and variable gene, encodes an extracellular protein involved in cellular segregation in Streptococcus thermophilus.</title>
        <authorList>
            <person name="Borges F."/>
            <person name="Layec S."/>
            <person name="Thibessard A."/>
            <person name="Fernandez A."/>
            <person name="Gintz B."/>
            <person name="Hols P."/>
            <person name="Decaris B."/>
            <person name="Leblond-Bourget N."/>
        </authorList>
    </citation>
    <scope>NUCLEOTIDE SEQUENCE [GENOMIC DNA]</scope>
</reference>
<reference key="2">
    <citation type="journal article" date="2004" name="Nat. Biotechnol.">
        <title>Complete sequence and comparative genome analysis of the dairy bacterium Streptococcus thermophilus.</title>
        <authorList>
            <person name="Bolotin A."/>
            <person name="Quinquis B."/>
            <person name="Renault P."/>
            <person name="Sorokin A."/>
            <person name="Ehrlich S.D."/>
            <person name="Kulakauskas S."/>
            <person name="Lapidus A."/>
            <person name="Goltsman E."/>
            <person name="Mazur M."/>
            <person name="Pusch G.D."/>
            <person name="Fonstein M."/>
            <person name="Overbeek R."/>
            <person name="Kyprides N."/>
            <person name="Purnelle B."/>
            <person name="Prozzi D."/>
            <person name="Ngui K."/>
            <person name="Masuy D."/>
            <person name="Hancy F."/>
            <person name="Burteau S."/>
            <person name="Boutry M."/>
            <person name="Delcour J."/>
            <person name="Goffeau A."/>
            <person name="Hols P."/>
        </authorList>
    </citation>
    <scope>NUCLEOTIDE SEQUENCE [LARGE SCALE GENOMIC DNA]</scope>
    <source>
        <strain>ATCC BAA-250 / LMG 18311</strain>
    </source>
</reference>
<gene>
    <name type="ordered locus">stu0441</name>
</gene>
<evidence type="ECO:0000255" key="1">
    <source>
        <dbReference type="HAMAP-Rule" id="MF_01538"/>
    </source>
</evidence>
<name>Y441_STRT2</name>